<protein>
    <recommendedName>
        <fullName>U26-theraphotoxin-Cg1b</fullName>
        <shortName>U26-TRTX-Cg1b</shortName>
    </recommendedName>
    <alternativeName>
        <fullName evidence="3">Jingzhaotoxin-57</fullName>
        <shortName evidence="3">JZTX-57</shortName>
    </alternativeName>
</protein>
<proteinExistence type="evidence at transcript level"/>
<feature type="signal peptide" evidence="2">
    <location>
        <begin position="1"/>
        <end position="18"/>
    </location>
</feature>
<feature type="propeptide" id="PRO_0000398528" evidence="1">
    <location>
        <begin position="19"/>
        <end position="67"/>
    </location>
</feature>
<feature type="peptide" id="PRO_0000398529" description="U26-theraphotoxin-Cg1b">
    <location>
        <begin position="68"/>
        <end position="109"/>
    </location>
</feature>
<feature type="disulfide bond" evidence="1">
    <location>
        <begin position="68"/>
        <end position="83"/>
    </location>
</feature>
<feature type="disulfide bond" evidence="1">
    <location>
        <begin position="75"/>
        <end position="88"/>
    </location>
</feature>
<feature type="disulfide bond" evidence="1">
    <location>
        <begin position="82"/>
        <end position="103"/>
    </location>
</feature>
<reference key="1">
    <citation type="journal article" date="2008" name="Cell. Mol. Life Sci.">
        <title>Molecular diversity and evolution of cystine knot toxins of the tarantula Chilobrachys jingzhao.</title>
        <authorList>
            <person name="Chen J."/>
            <person name="Deng M."/>
            <person name="He Q."/>
            <person name="Meng E."/>
            <person name="Jiang L."/>
            <person name="Liao Z."/>
            <person name="Rong M."/>
            <person name="Liang S."/>
        </authorList>
    </citation>
    <scope>NUCLEOTIDE SEQUENCE [LARGE SCALE MRNA]</scope>
    <source>
        <tissue>Venom gland</tissue>
    </source>
</reference>
<comment type="function">
    <text>Probable ion channel inhibitor.</text>
</comment>
<comment type="subcellular location">
    <subcellularLocation>
        <location evidence="1">Secreted</location>
    </subcellularLocation>
</comment>
<comment type="tissue specificity">
    <text>Expressed by the venom gland.</text>
</comment>
<comment type="domain">
    <text evidence="1">The presence of a 'disulfide through disulfide knot' structurally defines this protein as a knottin.</text>
</comment>
<comment type="similarity">
    <text evidence="4">Belongs to the neurotoxin 14 (magi-1) family. 07 (Jztx-56) subfamily.</text>
</comment>
<keyword id="KW-0165">Cleavage on pair of basic residues</keyword>
<keyword id="KW-1015">Disulfide bond</keyword>
<keyword id="KW-0872">Ion channel impairing toxin</keyword>
<keyword id="KW-0960">Knottin</keyword>
<keyword id="KW-0964">Secreted</keyword>
<keyword id="KW-0732">Signal</keyword>
<keyword id="KW-0800">Toxin</keyword>
<organism>
    <name type="scientific">Chilobrachys guangxiensis</name>
    <name type="common">Chinese earth tiger tarantula</name>
    <name type="synonym">Chilobrachys jingzhao</name>
    <dbReference type="NCBI Taxonomy" id="278060"/>
    <lineage>
        <taxon>Eukaryota</taxon>
        <taxon>Metazoa</taxon>
        <taxon>Ecdysozoa</taxon>
        <taxon>Arthropoda</taxon>
        <taxon>Chelicerata</taxon>
        <taxon>Arachnida</taxon>
        <taxon>Araneae</taxon>
        <taxon>Mygalomorphae</taxon>
        <taxon>Theraphosidae</taxon>
        <taxon>Chilobrachys</taxon>
    </lineage>
</organism>
<accession>B1P1H7</accession>
<sequence>MNTIIPLLLLSLLITVYAYALEDGNKEEMQDIAESEFEASNEMLQLAHLLEADRAETEEDRNSRQKRCWGANVPCEDENSPCCPPLKCEKTFGYGWWYGSPFCVRSGSG</sequence>
<name>JZT57_CHIGU</name>
<dbReference type="EMBL" id="EU233908">
    <property type="protein sequence ID" value="ABY71727.1"/>
    <property type="molecule type" value="mRNA"/>
</dbReference>
<dbReference type="ArachnoServer" id="AS000856">
    <property type="toxin name" value="U26-theraphotoxin-Cg1b"/>
</dbReference>
<dbReference type="GO" id="GO:0005576">
    <property type="term" value="C:extracellular region"/>
    <property type="evidence" value="ECO:0007669"/>
    <property type="project" value="UniProtKB-SubCell"/>
</dbReference>
<dbReference type="GO" id="GO:0019871">
    <property type="term" value="F:sodium channel inhibitor activity"/>
    <property type="evidence" value="ECO:0007669"/>
    <property type="project" value="InterPro"/>
</dbReference>
<dbReference type="GO" id="GO:0090729">
    <property type="term" value="F:toxin activity"/>
    <property type="evidence" value="ECO:0007669"/>
    <property type="project" value="UniProtKB-KW"/>
</dbReference>
<dbReference type="InterPro" id="IPR012627">
    <property type="entry name" value="Toxin_22"/>
</dbReference>
<dbReference type="Pfam" id="PF08092">
    <property type="entry name" value="Toxin_22"/>
    <property type="match status" value="1"/>
</dbReference>
<evidence type="ECO:0000250" key="1"/>
<evidence type="ECO:0000255" key="2"/>
<evidence type="ECO:0000303" key="3">
    <source>
    </source>
</evidence>
<evidence type="ECO:0000305" key="4"/>